<sequence>MDTFITKNFQTTIIQKAKNTMAEFSEDPELQPAVLFNICVHLEVCYVISDMNFLDEEGKTYTALEGQGKEQNLRPQYEVIEGMPRNIAWMVQRSLAQEHGIETPRYLADLFDYKTKRFIEVGITKGLADDYFWKKKEKLGNSMELMIFSYNQDYSLSDESSLDEEGKGRVLSRLTELQAELSLKNLWQVLIGEEEIEKGIDFKLGQTISKLRNISVPAGFSNFEGMRSYIDNIDPKGAIERNLARMSPLVSVTPKKLKWEDLRPIGPHIYNHELPEVPYNAFLLMSDELGLANMTEGKSKKPKTLAKECLERYSTLRDQTDPILIMKSEKANENFLWRLWRDCVNTISNEETGNELQKTNYAKWATGDGLTYQKIMKEVAIDDETMYQEEPKIPNKCRVAAWVQAEMNLLSTLTSKRALDLPEIGPDVAPVEHVGSERRKYFVNEINYCKASTVMMKYVLFHTSLLNESNASMGKYKVIPITNRVVNEKGESFDMLYGLAVKGQSHLRGDTDVVTVVTFEFSSTDPRVDSGKWPKYTVFKIGSLFVSGREKPVYLYCRVNGTNKIQMKWGMEARRCLLQSMQQMEAIVDQESSIQGYDMTKACFKGDRVNNPKTFSIGTQEGKLVKGSFGKALRVIFTKCLMHYVFGNAQLEGFSAESRRLLLLIQALKDRKGPWVFDLEGMYFGVEECISNNPWVIQSAYWFNEWLGIEKEGSKVLESIDEIMDE</sequence>
<proteinExistence type="inferred from homology"/>
<keyword id="KW-1157">Cap snatching</keyword>
<keyword id="KW-0255">Endonuclease</keyword>
<keyword id="KW-1262">Eukaryotic host gene expression shutoff by virus</keyword>
<keyword id="KW-1191">Eukaryotic host transcription shutoff by virus</keyword>
<keyword id="KW-1035">Host cytoplasm</keyword>
<keyword id="KW-1190">Host gene expression shutoff by virus</keyword>
<keyword id="KW-1048">Host nucleus</keyword>
<keyword id="KW-0945">Host-virus interaction</keyword>
<keyword id="KW-0378">Hydrolase</keyword>
<keyword id="KW-1104">Inhibition of host RNA polymerase II by virus</keyword>
<keyword id="KW-0464">Manganese</keyword>
<keyword id="KW-0479">Metal-binding</keyword>
<keyword id="KW-0540">Nuclease</keyword>
<keyword id="KW-0597">Phosphoprotein</keyword>
<keyword id="KW-1185">Reference proteome</keyword>
<keyword id="KW-0688">Ribosomal frameshifting</keyword>
<dbReference type="EC" id="3.1.-.-" evidence="1"/>
<dbReference type="EMBL" id="AF102017">
    <property type="protein sequence ID" value="AAF06886.1"/>
    <property type="molecule type" value="Genomic_RNA"/>
</dbReference>
<dbReference type="RefSeq" id="NP_056659.1">
    <molecule id="Q9QLI9-1"/>
    <property type="nucleotide sequence ID" value="NC_002206.1"/>
</dbReference>
<dbReference type="SMR" id="Q9QLI9"/>
<dbReference type="IntAct" id="Q9QLI9">
    <property type="interactions" value="1"/>
</dbReference>
<dbReference type="BindingDB" id="Q9QLI9"/>
<dbReference type="ChEMBL" id="CHEMBL2028641"/>
<dbReference type="GeneID" id="956547"/>
<dbReference type="KEGG" id="vg:956547"/>
<dbReference type="OrthoDB" id="495at10239"/>
<dbReference type="PRO" id="PR:Q9QLI9"/>
<dbReference type="Proteomes" id="UP000008158">
    <property type="component" value="Genome"/>
</dbReference>
<dbReference type="GO" id="GO:0030430">
    <property type="term" value="C:host cell cytoplasm"/>
    <property type="evidence" value="ECO:0007669"/>
    <property type="project" value="UniProtKB-SubCell"/>
</dbReference>
<dbReference type="GO" id="GO:0042025">
    <property type="term" value="C:host cell nucleus"/>
    <property type="evidence" value="ECO:0007669"/>
    <property type="project" value="UniProtKB-SubCell"/>
</dbReference>
<dbReference type="GO" id="GO:0004519">
    <property type="term" value="F:endonuclease activity"/>
    <property type="evidence" value="ECO:0007669"/>
    <property type="project" value="UniProtKB-KW"/>
</dbReference>
<dbReference type="GO" id="GO:0046872">
    <property type="term" value="F:metal ion binding"/>
    <property type="evidence" value="ECO:0007669"/>
    <property type="project" value="UniProtKB-KW"/>
</dbReference>
<dbReference type="GO" id="GO:0003723">
    <property type="term" value="F:RNA binding"/>
    <property type="evidence" value="ECO:0007669"/>
    <property type="project" value="UniProtKB-UniRule"/>
</dbReference>
<dbReference type="GO" id="GO:0075526">
    <property type="term" value="P:cap snatching"/>
    <property type="evidence" value="ECO:0007669"/>
    <property type="project" value="UniProtKB-UniRule"/>
</dbReference>
<dbReference type="GO" id="GO:0006351">
    <property type="term" value="P:DNA-templated transcription"/>
    <property type="evidence" value="ECO:0007669"/>
    <property type="project" value="UniProtKB-UniRule"/>
</dbReference>
<dbReference type="GO" id="GO:0039657">
    <property type="term" value="P:symbiont-mediated suppression of host gene expression"/>
    <property type="evidence" value="ECO:0007669"/>
    <property type="project" value="UniProtKB-KW"/>
</dbReference>
<dbReference type="GO" id="GO:0039523">
    <property type="term" value="P:symbiont-mediated suppression of host mRNA transcription via inhibition of RNA polymerase II activity"/>
    <property type="evidence" value="ECO:0007669"/>
    <property type="project" value="UniProtKB-UniRule"/>
</dbReference>
<dbReference type="GO" id="GO:0039694">
    <property type="term" value="P:viral RNA genome replication"/>
    <property type="evidence" value="ECO:0007669"/>
    <property type="project" value="InterPro"/>
</dbReference>
<dbReference type="GO" id="GO:0075523">
    <property type="term" value="P:viral translational frameshifting"/>
    <property type="evidence" value="ECO:0007669"/>
    <property type="project" value="UniProtKB-KW"/>
</dbReference>
<dbReference type="Gene3D" id="3.40.91.90">
    <property type="entry name" value="Influenza RNA-dependent RNA polymerase subunit PA, endonuclease domain"/>
    <property type="match status" value="1"/>
</dbReference>
<dbReference type="HAMAP" id="MF_04063">
    <property type="entry name" value="INFV_PA"/>
    <property type="match status" value="1"/>
</dbReference>
<dbReference type="InterPro" id="IPR037534">
    <property type="entry name" value="INFV_PA"/>
</dbReference>
<dbReference type="InterPro" id="IPR001009">
    <property type="entry name" value="PA/PA-X"/>
</dbReference>
<dbReference type="InterPro" id="IPR038372">
    <property type="entry name" value="PA/PA-X_sf"/>
</dbReference>
<dbReference type="Pfam" id="PF00603">
    <property type="entry name" value="Flu_PA"/>
    <property type="match status" value="1"/>
</dbReference>
<accession>Q9QLI9</accession>
<evidence type="ECO:0000255" key="1">
    <source>
        <dbReference type="HAMAP-Rule" id="MF_04063"/>
    </source>
</evidence>
<feature type="chain" id="PRO_0000391499" description="Polymerase acidic protein">
    <location>
        <begin position="1"/>
        <end position="726"/>
    </location>
</feature>
<feature type="short sequence motif" description="Nuclear localization signal 1 (NLS1)" evidence="1">
    <location>
        <begin position="125"/>
        <end position="140"/>
    </location>
</feature>
<feature type="short sequence motif" description="Nuclear localization signal 2 (NLS2)" evidence="1">
    <location>
        <begin position="183"/>
        <end position="244"/>
    </location>
</feature>
<feature type="binding site" evidence="1">
    <location>
        <position position="41"/>
    </location>
    <ligand>
        <name>Mn(2+)</name>
        <dbReference type="ChEBI" id="CHEBI:29035"/>
        <label>1</label>
    </ligand>
</feature>
<feature type="binding site" evidence="1">
    <location>
        <position position="81"/>
    </location>
    <ligand>
        <name>Mn(2+)</name>
        <dbReference type="ChEBI" id="CHEBI:29035"/>
        <label>2</label>
    </ligand>
</feature>
<feature type="binding site" evidence="1">
    <location>
        <position position="109"/>
    </location>
    <ligand>
        <name>Mn(2+)</name>
        <dbReference type="ChEBI" id="CHEBI:29035"/>
        <label>1</label>
    </ligand>
</feature>
<feature type="binding site" evidence="1">
    <location>
        <position position="109"/>
    </location>
    <ligand>
        <name>Mn(2+)</name>
        <dbReference type="ChEBI" id="CHEBI:29035"/>
        <label>2</label>
    </ligand>
</feature>
<feature type="binding site" evidence="1">
    <location>
        <position position="120"/>
    </location>
    <ligand>
        <name>Mn(2+)</name>
        <dbReference type="ChEBI" id="CHEBI:29035"/>
        <label>1</label>
    </ligand>
</feature>
<feature type="binding site" evidence="1">
    <location>
        <position position="121"/>
    </location>
    <ligand>
        <name>Mn(2+)</name>
        <dbReference type="ChEBI" id="CHEBI:29035"/>
        <label>1</label>
    </ligand>
</feature>
<comment type="function">
    <text evidence="1">Plays an essential role in viral RNA transcription and replication by forming the heterotrimeric polymerase complex together with PB1 and PB2 subunits. The complex transcribes viral mRNAs by using a unique mechanism called cap-snatching. It consists in the hijacking and cleavage of host capped pre-mRNAs. These short capped RNAs are then used as primers for viral mRNAs. The PB2 subunit is responsible for the binding of the 5' cap of cellular pre-mRNAs which are subsequently cleaved after 10-13 nucleotides by the PA subunit that carries the endonuclease activity.</text>
</comment>
<comment type="cofactor">
    <cofactor evidence="1">
        <name>Mn(2+)</name>
        <dbReference type="ChEBI" id="CHEBI:29035"/>
    </cofactor>
    <text evidence="1">Binds 2 manganese ions per subunit.</text>
</comment>
<comment type="subunit">
    <text evidence="1">Influenza RNA polymerase is composed of three subunits: PB1, PB2 and PA. Interacts (via C-terminus) with PB1 (via N-terminus).</text>
</comment>
<comment type="subcellular location">
    <subcellularLocation>
        <location evidence="1">Host cytoplasm</location>
    </subcellularLocation>
    <subcellularLocation>
        <location evidence="1">Host nucleus</location>
    </subcellularLocation>
    <text evidence="1">PB1 and PA are transported in the host nucleus as a complex.</text>
</comment>
<comment type="alternative products">
    <event type="ribosomal frameshifting"/>
    <isoform>
        <id>Q9QLI9-1</id>
        <name>PA</name>
        <sequence type="displayed"/>
    </isoform>
    <isoform>
        <id>Q9QLI9-2</id>
        <name>PA-X</name>
        <sequence type="not described"/>
    </isoform>
</comment>
<comment type="PTM">
    <text evidence="1">Phosphorylated on serines and threonines by host kinases, including human casein kinase II.</text>
</comment>
<comment type="similarity">
    <text evidence="1">Belongs to the influenza viruses PA family.</text>
</comment>
<organism>
    <name type="scientific">Influenza B virus (strain B/Lee/1940)</name>
    <dbReference type="NCBI Taxonomy" id="518987"/>
    <lineage>
        <taxon>Viruses</taxon>
        <taxon>Riboviria</taxon>
        <taxon>Orthornavirae</taxon>
        <taxon>Negarnaviricota</taxon>
        <taxon>Polyploviricotina</taxon>
        <taxon>Insthoviricetes</taxon>
        <taxon>Articulavirales</taxon>
        <taxon>Orthomyxoviridae</taxon>
        <taxon>Betainfluenzavirus</taxon>
        <taxon>Betainfluenzavirus influenzae</taxon>
        <taxon>Influenza B virus</taxon>
    </lineage>
</organism>
<organismHost>
    <name type="scientific">Homo sapiens</name>
    <name type="common">Human</name>
    <dbReference type="NCBI Taxonomy" id="9606"/>
</organismHost>
<reference key="1">
    <citation type="journal article" date="2000" name="J. Gen. Virol.">
        <title>Phylogenetic analysis of the three polymerase genes (PB1, PB2 and PA) of influenza B virus.</title>
        <authorList>
            <person name="Hiromoto Y."/>
            <person name="Saito T."/>
            <person name="Lindstrom S.E."/>
            <person name="Li Y."/>
            <person name="Nerome R."/>
            <person name="Sugita S."/>
            <person name="Shinjoh M."/>
            <person name="Nerome K."/>
        </authorList>
    </citation>
    <scope>NUCLEOTIDE SEQUENCE [GENOMIC RNA]</scope>
</reference>
<gene>
    <name evidence="1" type="primary">PA</name>
</gene>
<protein>
    <recommendedName>
        <fullName evidence="1">Polymerase acidic protein</fullName>
        <ecNumber evidence="1">3.1.-.-</ecNumber>
    </recommendedName>
    <alternativeName>
        <fullName evidence="1">RNA-directed RNA polymerase subunit P2</fullName>
    </alternativeName>
</protein>
<name>PA_INBLE</name>